<sequence>MNKFWETGRKIVAVGRNYAQHAKELGNEIPSEPFFFLKPTSSYLLQGTGPIEIPLESSDIHHEVELGIVIGKKGRDIDLKSAMDYVSGYTLALDMTSRDQQSIAKAKSLPWTVSKGYDTFCPISGFIPKDKIKDLNNVELWCSVDGQIKQKGNTNQMIFDVPHLIQYISSIMTLESGDLILTGTPSGVGPVKPGQVIKCGITGLDTDMQFDIILRKRN</sequence>
<keyword id="KW-0963">Cytoplasm</keyword>
<keyword id="KW-0378">Hydrolase</keyword>
<keyword id="KW-0456">Lyase</keyword>
<keyword id="KW-0460">Magnesium</keyword>
<keyword id="KW-0464">Manganese</keyword>
<keyword id="KW-0479">Metal-binding</keyword>
<keyword id="KW-0496">Mitochondrion</keyword>
<keyword id="KW-1185">Reference proteome</keyword>
<keyword id="KW-0809">Transit peptide</keyword>
<feature type="transit peptide" description="Mitochondrion" evidence="2">
    <location>
        <begin position="1"/>
        <end position="18"/>
    </location>
</feature>
<feature type="chain" id="PRO_0000328293" description="Oxaloacetate decarboxylase, mitochondrial">
    <location>
        <begin position="19"/>
        <end position="218"/>
    </location>
</feature>
<feature type="binding site" evidence="1">
    <location>
        <position position="63"/>
    </location>
    <ligand>
        <name>Mg(2+)</name>
        <dbReference type="ChEBI" id="CHEBI:18420"/>
    </ligand>
</feature>
<feature type="binding site" evidence="1">
    <location>
        <position position="65"/>
    </location>
    <ligand>
        <name>Mg(2+)</name>
        <dbReference type="ChEBI" id="CHEBI:18420"/>
    </ligand>
</feature>
<feature type="binding site" evidence="1">
    <location>
        <position position="94"/>
    </location>
    <ligand>
        <name>Mg(2+)</name>
        <dbReference type="ChEBI" id="CHEBI:18420"/>
    </ligand>
</feature>
<reference key="1">
    <citation type="journal article" date="2002" name="Nature">
        <title>Sequence and analysis of chromosome 2 of Dictyostelium discoideum.</title>
        <authorList>
            <person name="Gloeckner G."/>
            <person name="Eichinger L."/>
            <person name="Szafranski K."/>
            <person name="Pachebat J.A."/>
            <person name="Bankier A.T."/>
            <person name="Dear P.H."/>
            <person name="Lehmann R."/>
            <person name="Baumgart C."/>
            <person name="Parra G."/>
            <person name="Abril J.F."/>
            <person name="Guigo R."/>
            <person name="Kumpf K."/>
            <person name="Tunggal B."/>
            <person name="Cox E.C."/>
            <person name="Quail M.A."/>
            <person name="Platzer M."/>
            <person name="Rosenthal A."/>
            <person name="Noegel A.A."/>
        </authorList>
    </citation>
    <scope>NUCLEOTIDE SEQUENCE [LARGE SCALE GENOMIC DNA]</scope>
    <source>
        <strain>AX4</strain>
    </source>
</reference>
<reference key="2">
    <citation type="journal article" date="2005" name="Nature">
        <title>The genome of the social amoeba Dictyostelium discoideum.</title>
        <authorList>
            <person name="Eichinger L."/>
            <person name="Pachebat J.A."/>
            <person name="Gloeckner G."/>
            <person name="Rajandream M.A."/>
            <person name="Sucgang R."/>
            <person name="Berriman M."/>
            <person name="Song J."/>
            <person name="Olsen R."/>
            <person name="Szafranski K."/>
            <person name="Xu Q."/>
            <person name="Tunggal B."/>
            <person name="Kummerfeld S."/>
            <person name="Madera M."/>
            <person name="Konfortov B.A."/>
            <person name="Rivero F."/>
            <person name="Bankier A.T."/>
            <person name="Lehmann R."/>
            <person name="Hamlin N."/>
            <person name="Davies R."/>
            <person name="Gaudet P."/>
            <person name="Fey P."/>
            <person name="Pilcher K."/>
            <person name="Chen G."/>
            <person name="Saunders D."/>
            <person name="Sodergren E.J."/>
            <person name="Davis P."/>
            <person name="Kerhornou A."/>
            <person name="Nie X."/>
            <person name="Hall N."/>
            <person name="Anjard C."/>
            <person name="Hemphill L."/>
            <person name="Bason N."/>
            <person name="Farbrother P."/>
            <person name="Desany B."/>
            <person name="Just E."/>
            <person name="Morio T."/>
            <person name="Rost R."/>
            <person name="Churcher C.M."/>
            <person name="Cooper J."/>
            <person name="Haydock S."/>
            <person name="van Driessche N."/>
            <person name="Cronin A."/>
            <person name="Goodhead I."/>
            <person name="Muzny D.M."/>
            <person name="Mourier T."/>
            <person name="Pain A."/>
            <person name="Lu M."/>
            <person name="Harper D."/>
            <person name="Lindsay R."/>
            <person name="Hauser H."/>
            <person name="James K.D."/>
            <person name="Quiles M."/>
            <person name="Madan Babu M."/>
            <person name="Saito T."/>
            <person name="Buchrieser C."/>
            <person name="Wardroper A."/>
            <person name="Felder M."/>
            <person name="Thangavelu M."/>
            <person name="Johnson D."/>
            <person name="Knights A."/>
            <person name="Loulseged H."/>
            <person name="Mungall K.L."/>
            <person name="Oliver K."/>
            <person name="Price C."/>
            <person name="Quail M.A."/>
            <person name="Urushihara H."/>
            <person name="Hernandez J."/>
            <person name="Rabbinowitsch E."/>
            <person name="Steffen D."/>
            <person name="Sanders M."/>
            <person name="Ma J."/>
            <person name="Kohara Y."/>
            <person name="Sharp S."/>
            <person name="Simmonds M.N."/>
            <person name="Spiegler S."/>
            <person name="Tivey A."/>
            <person name="Sugano S."/>
            <person name="White B."/>
            <person name="Walker D."/>
            <person name="Woodward J.R."/>
            <person name="Winckler T."/>
            <person name="Tanaka Y."/>
            <person name="Shaulsky G."/>
            <person name="Schleicher M."/>
            <person name="Weinstock G.M."/>
            <person name="Rosenthal A."/>
            <person name="Cox E.C."/>
            <person name="Chisholm R.L."/>
            <person name="Gibbs R.A."/>
            <person name="Loomis W.F."/>
            <person name="Platzer M."/>
            <person name="Kay R.R."/>
            <person name="Williams J.G."/>
            <person name="Dear P.H."/>
            <person name="Noegel A.A."/>
            <person name="Barrell B.G."/>
            <person name="Kuspa A."/>
        </authorList>
    </citation>
    <scope>NUCLEOTIDE SEQUENCE [LARGE SCALE GENOMIC DNA]</scope>
    <source>
        <strain>AX4</strain>
    </source>
</reference>
<accession>Q86I22</accession>
<accession>Q554C6</accession>
<gene>
    <name type="primary">fahd1</name>
    <name type="ORF">DDB_G0275071</name>
</gene>
<dbReference type="EC" id="4.1.1.112" evidence="1"/>
<dbReference type="EC" id="3.7.1.5" evidence="1"/>
<dbReference type="EMBL" id="AAFI02000013">
    <property type="protein sequence ID" value="EAL69816.1"/>
    <property type="molecule type" value="Genomic_DNA"/>
</dbReference>
<dbReference type="RefSeq" id="XP_643785.1">
    <property type="nucleotide sequence ID" value="XM_638693.1"/>
</dbReference>
<dbReference type="SMR" id="Q86I22"/>
<dbReference type="FunCoup" id="Q86I22">
    <property type="interactions" value="262"/>
</dbReference>
<dbReference type="STRING" id="44689.Q86I22"/>
<dbReference type="PaxDb" id="44689-DDB0237520"/>
<dbReference type="EnsemblProtists" id="EAL69816">
    <property type="protein sequence ID" value="EAL69816"/>
    <property type="gene ID" value="DDB_G0275071"/>
</dbReference>
<dbReference type="GeneID" id="8619830"/>
<dbReference type="KEGG" id="ddi:DDB_G0275071"/>
<dbReference type="dictyBase" id="DDB_G0275071">
    <property type="gene designation" value="fahd1"/>
</dbReference>
<dbReference type="VEuPathDB" id="AmoebaDB:DDB_G0275071"/>
<dbReference type="eggNOG" id="KOG1535">
    <property type="taxonomic scope" value="Eukaryota"/>
</dbReference>
<dbReference type="HOGENOM" id="CLU_028458_5_0_1"/>
<dbReference type="InParanoid" id="Q86I22"/>
<dbReference type="OMA" id="WNIAETI"/>
<dbReference type="PhylomeDB" id="Q86I22"/>
<dbReference type="Reactome" id="R-DDI-70268">
    <property type="pathway name" value="Pyruvate metabolism"/>
</dbReference>
<dbReference type="PRO" id="PR:Q86I22"/>
<dbReference type="Proteomes" id="UP000002195">
    <property type="component" value="Chromosome 2"/>
</dbReference>
<dbReference type="GO" id="GO:0005829">
    <property type="term" value="C:cytosol"/>
    <property type="evidence" value="ECO:0007669"/>
    <property type="project" value="UniProtKB-SubCell"/>
</dbReference>
<dbReference type="GO" id="GO:0005739">
    <property type="term" value="C:mitochondrion"/>
    <property type="evidence" value="ECO:0000318"/>
    <property type="project" value="GO_Central"/>
</dbReference>
<dbReference type="GO" id="GO:0018773">
    <property type="term" value="F:acetylpyruvate hydrolase activity"/>
    <property type="evidence" value="ECO:0000250"/>
    <property type="project" value="UniProtKB"/>
</dbReference>
<dbReference type="GO" id="GO:0047621">
    <property type="term" value="F:acylpyruvate hydrolase activity"/>
    <property type="evidence" value="ECO:0007669"/>
    <property type="project" value="UniProtKB-EC"/>
</dbReference>
<dbReference type="GO" id="GO:0034545">
    <property type="term" value="F:fumarylpyruvate hydrolase activity"/>
    <property type="evidence" value="ECO:0000250"/>
    <property type="project" value="UniProtKB"/>
</dbReference>
<dbReference type="GO" id="GO:0046872">
    <property type="term" value="F:metal ion binding"/>
    <property type="evidence" value="ECO:0007669"/>
    <property type="project" value="UniProtKB-KW"/>
</dbReference>
<dbReference type="GO" id="GO:0008948">
    <property type="term" value="F:oxaloacetate decarboxylase activity"/>
    <property type="evidence" value="ECO:0007669"/>
    <property type="project" value="RHEA"/>
</dbReference>
<dbReference type="FunFam" id="3.90.850.10:FF:000003">
    <property type="entry name" value="Fumarylacetoacetate hydrolase domain-containing 1"/>
    <property type="match status" value="1"/>
</dbReference>
<dbReference type="Gene3D" id="3.90.850.10">
    <property type="entry name" value="Fumarylacetoacetase-like, C-terminal domain"/>
    <property type="match status" value="1"/>
</dbReference>
<dbReference type="InterPro" id="IPR011234">
    <property type="entry name" value="Fumarylacetoacetase-like_C"/>
</dbReference>
<dbReference type="InterPro" id="IPR036663">
    <property type="entry name" value="Fumarylacetoacetase_C_sf"/>
</dbReference>
<dbReference type="PANTHER" id="PTHR11820">
    <property type="entry name" value="ACYLPYRUVASE"/>
    <property type="match status" value="1"/>
</dbReference>
<dbReference type="PANTHER" id="PTHR11820:SF7">
    <property type="entry name" value="ACYLPYRUVASE FAHD1, MITOCHONDRIAL"/>
    <property type="match status" value="1"/>
</dbReference>
<dbReference type="Pfam" id="PF01557">
    <property type="entry name" value="FAA_hydrolase"/>
    <property type="match status" value="1"/>
</dbReference>
<dbReference type="SUPFAM" id="SSF56529">
    <property type="entry name" value="FAH"/>
    <property type="match status" value="1"/>
</dbReference>
<name>FAHD1_DICDI</name>
<organism>
    <name type="scientific">Dictyostelium discoideum</name>
    <name type="common">Social amoeba</name>
    <dbReference type="NCBI Taxonomy" id="44689"/>
    <lineage>
        <taxon>Eukaryota</taxon>
        <taxon>Amoebozoa</taxon>
        <taxon>Evosea</taxon>
        <taxon>Eumycetozoa</taxon>
        <taxon>Dictyostelia</taxon>
        <taxon>Dictyosteliales</taxon>
        <taxon>Dictyosteliaceae</taxon>
        <taxon>Dictyostelium</taxon>
    </lineage>
</organism>
<protein>
    <recommendedName>
        <fullName evidence="1">Oxaloacetate decarboxylase, mitochondrial</fullName>
        <shortName evidence="1">OAA decarboxylase</shortName>
        <ecNumber evidence="1">4.1.1.112</ecNumber>
    </recommendedName>
    <alternativeName>
        <fullName>Acylpyruvase FAHD1</fullName>
        <ecNumber evidence="1">3.7.1.5</ecNumber>
    </alternativeName>
    <alternativeName>
        <fullName>Fumarylacetoacetate hydrolase domain-containing protein 1</fullName>
    </alternativeName>
</protein>
<comment type="function">
    <text evidence="1">Mitochondrial protein that acts as an oxaloacetate decarboxylase (ODx), catalyzing the decarboxylation of oxaloacetate (OAA) to pyruvate and CO(2), and as such is likely a regulatory enzyme in the TCA cycle. Also displays acylpyruvase activity, being able to hydrolyze acetylpyruvate and fumarylpyruvate in vitro.</text>
</comment>
<comment type="catalytic activity">
    <reaction evidence="1">
        <text>a 3-acylpyruvate + H2O = a carboxylate + pyruvate + H(+)</text>
        <dbReference type="Rhea" id="RHEA:19009"/>
        <dbReference type="ChEBI" id="CHEBI:15361"/>
        <dbReference type="ChEBI" id="CHEBI:15377"/>
        <dbReference type="ChEBI" id="CHEBI:15378"/>
        <dbReference type="ChEBI" id="CHEBI:29067"/>
        <dbReference type="ChEBI" id="CHEBI:57278"/>
        <dbReference type="EC" id="3.7.1.5"/>
    </reaction>
</comment>
<comment type="catalytic activity">
    <reaction evidence="1">
        <text>acetylpyruvate + H2O = acetate + pyruvate + H(+)</text>
        <dbReference type="Rhea" id="RHEA:16097"/>
        <dbReference type="ChEBI" id="CHEBI:15360"/>
        <dbReference type="ChEBI" id="CHEBI:15361"/>
        <dbReference type="ChEBI" id="CHEBI:15377"/>
        <dbReference type="ChEBI" id="CHEBI:15378"/>
        <dbReference type="ChEBI" id="CHEBI:30089"/>
    </reaction>
</comment>
<comment type="catalytic activity">
    <reaction evidence="1">
        <text>3-fumarylpyruvate + H2O = fumarate + pyruvate + H(+)</text>
        <dbReference type="Rhea" id="RHEA:26168"/>
        <dbReference type="ChEBI" id="CHEBI:15361"/>
        <dbReference type="ChEBI" id="CHEBI:15377"/>
        <dbReference type="ChEBI" id="CHEBI:15378"/>
        <dbReference type="ChEBI" id="CHEBI:16854"/>
        <dbReference type="ChEBI" id="CHEBI:29806"/>
    </reaction>
</comment>
<comment type="catalytic activity">
    <reaction evidence="1">
        <text>oxaloacetate + H(+) = pyruvate + CO2</text>
        <dbReference type="Rhea" id="RHEA:15641"/>
        <dbReference type="ChEBI" id="CHEBI:15361"/>
        <dbReference type="ChEBI" id="CHEBI:15378"/>
        <dbReference type="ChEBI" id="CHEBI:16452"/>
        <dbReference type="ChEBI" id="CHEBI:16526"/>
        <dbReference type="EC" id="4.1.1.112"/>
    </reaction>
</comment>
<comment type="cofactor">
    <cofactor evidence="1">
        <name>Mg(2+)</name>
        <dbReference type="ChEBI" id="CHEBI:18420"/>
    </cofactor>
    <cofactor evidence="1">
        <name>Mn(2+)</name>
        <dbReference type="ChEBI" id="CHEBI:29035"/>
    </cofactor>
</comment>
<comment type="subunit">
    <text evidence="1">Homodimer.</text>
</comment>
<comment type="subcellular location">
    <subcellularLocation>
        <location evidence="1">Mitochondrion</location>
    </subcellularLocation>
    <subcellularLocation>
        <location evidence="1">Cytoplasm</location>
        <location evidence="1">Cytosol</location>
    </subcellularLocation>
</comment>
<comment type="similarity">
    <text evidence="3">Belongs to the FAH family.</text>
</comment>
<evidence type="ECO:0000250" key="1">
    <source>
        <dbReference type="UniProtKB" id="Q6P587"/>
    </source>
</evidence>
<evidence type="ECO:0000255" key="2"/>
<evidence type="ECO:0000305" key="3"/>
<proteinExistence type="inferred from homology"/>